<feature type="initiator methionine" description="Removed" evidence="1">
    <location>
        <position position="1"/>
    </location>
</feature>
<feature type="chain" id="PRO_0000061998" description="Photosystem I iron-sulfur center">
    <location>
        <begin position="2"/>
        <end position="81"/>
    </location>
</feature>
<feature type="domain" description="4Fe-4S ferredoxin-type 1" evidence="2">
    <location>
        <begin position="2"/>
        <end position="31"/>
    </location>
</feature>
<feature type="domain" description="4Fe-4S ferredoxin-type 2" evidence="2">
    <location>
        <begin position="39"/>
        <end position="68"/>
    </location>
</feature>
<feature type="binding site" evidence="2">
    <location>
        <position position="11"/>
    </location>
    <ligand>
        <name>[4Fe-4S] cluster</name>
        <dbReference type="ChEBI" id="CHEBI:49883"/>
        <label>1</label>
    </ligand>
</feature>
<feature type="binding site" evidence="2">
    <location>
        <position position="14"/>
    </location>
    <ligand>
        <name>[4Fe-4S] cluster</name>
        <dbReference type="ChEBI" id="CHEBI:49883"/>
        <label>1</label>
    </ligand>
</feature>
<feature type="binding site" evidence="2">
    <location>
        <position position="17"/>
    </location>
    <ligand>
        <name>[4Fe-4S] cluster</name>
        <dbReference type="ChEBI" id="CHEBI:49883"/>
        <label>1</label>
    </ligand>
</feature>
<feature type="binding site" evidence="2">
    <location>
        <position position="21"/>
    </location>
    <ligand>
        <name>[4Fe-4S] cluster</name>
        <dbReference type="ChEBI" id="CHEBI:49883"/>
        <label>2</label>
    </ligand>
</feature>
<feature type="binding site" evidence="2">
    <location>
        <position position="48"/>
    </location>
    <ligand>
        <name>[4Fe-4S] cluster</name>
        <dbReference type="ChEBI" id="CHEBI:49883"/>
        <label>2</label>
    </ligand>
</feature>
<feature type="binding site" evidence="2">
    <location>
        <position position="51"/>
    </location>
    <ligand>
        <name>[4Fe-4S] cluster</name>
        <dbReference type="ChEBI" id="CHEBI:49883"/>
        <label>2</label>
    </ligand>
</feature>
<feature type="binding site" evidence="2">
    <location>
        <position position="54"/>
    </location>
    <ligand>
        <name>[4Fe-4S] cluster</name>
        <dbReference type="ChEBI" id="CHEBI:49883"/>
        <label>2</label>
    </ligand>
</feature>
<feature type="binding site" evidence="2">
    <location>
        <position position="58"/>
    </location>
    <ligand>
        <name>[4Fe-4S] cluster</name>
        <dbReference type="ChEBI" id="CHEBI:49883"/>
        <label>1</label>
    </ligand>
</feature>
<gene>
    <name evidence="2" type="primary">psaC</name>
</gene>
<keyword id="KW-0004">4Fe-4S</keyword>
<keyword id="KW-0150">Chloroplast</keyword>
<keyword id="KW-0249">Electron transport</keyword>
<keyword id="KW-0408">Iron</keyword>
<keyword id="KW-0411">Iron-sulfur</keyword>
<keyword id="KW-0472">Membrane</keyword>
<keyword id="KW-0479">Metal-binding</keyword>
<keyword id="KW-0560">Oxidoreductase</keyword>
<keyword id="KW-0602">Photosynthesis</keyword>
<keyword id="KW-0603">Photosystem I</keyword>
<keyword id="KW-0934">Plastid</keyword>
<keyword id="KW-0677">Repeat</keyword>
<keyword id="KW-0793">Thylakoid</keyword>
<keyword id="KW-0813">Transport</keyword>
<dbReference type="EC" id="1.97.1.12" evidence="2"/>
<dbReference type="EMBL" id="AY228468">
    <property type="protein sequence ID" value="AAO74120.1"/>
    <property type="molecule type" value="Genomic_DNA"/>
</dbReference>
<dbReference type="RefSeq" id="NP_817288.1">
    <property type="nucleotide sequence ID" value="NC_004677.2"/>
</dbReference>
<dbReference type="SMR" id="Q85WU9"/>
<dbReference type="GeneID" id="806895"/>
<dbReference type="GO" id="GO:0009535">
    <property type="term" value="C:chloroplast thylakoid membrane"/>
    <property type="evidence" value="ECO:0007669"/>
    <property type="project" value="UniProtKB-SubCell"/>
</dbReference>
<dbReference type="GO" id="GO:0009522">
    <property type="term" value="C:photosystem I"/>
    <property type="evidence" value="ECO:0007669"/>
    <property type="project" value="UniProtKB-KW"/>
</dbReference>
<dbReference type="GO" id="GO:0051539">
    <property type="term" value="F:4 iron, 4 sulfur cluster binding"/>
    <property type="evidence" value="ECO:0007669"/>
    <property type="project" value="UniProtKB-KW"/>
</dbReference>
<dbReference type="GO" id="GO:0009055">
    <property type="term" value="F:electron transfer activity"/>
    <property type="evidence" value="ECO:0007669"/>
    <property type="project" value="UniProtKB-UniRule"/>
</dbReference>
<dbReference type="GO" id="GO:0046872">
    <property type="term" value="F:metal ion binding"/>
    <property type="evidence" value="ECO:0007669"/>
    <property type="project" value="UniProtKB-KW"/>
</dbReference>
<dbReference type="GO" id="GO:0016491">
    <property type="term" value="F:oxidoreductase activity"/>
    <property type="evidence" value="ECO:0007669"/>
    <property type="project" value="UniProtKB-KW"/>
</dbReference>
<dbReference type="GO" id="GO:0009773">
    <property type="term" value="P:photosynthetic electron transport in photosystem I"/>
    <property type="evidence" value="ECO:0007669"/>
    <property type="project" value="InterPro"/>
</dbReference>
<dbReference type="FunFam" id="3.30.70.20:FF:000001">
    <property type="entry name" value="Photosystem I iron-sulfur center"/>
    <property type="match status" value="1"/>
</dbReference>
<dbReference type="Gene3D" id="3.30.70.20">
    <property type="match status" value="1"/>
</dbReference>
<dbReference type="HAMAP" id="MF_01303">
    <property type="entry name" value="PSI_PsaC"/>
    <property type="match status" value="1"/>
</dbReference>
<dbReference type="InterPro" id="IPR017896">
    <property type="entry name" value="4Fe4S_Fe-S-bd"/>
</dbReference>
<dbReference type="InterPro" id="IPR017900">
    <property type="entry name" value="4Fe4S_Fe_S_CS"/>
</dbReference>
<dbReference type="InterPro" id="IPR050157">
    <property type="entry name" value="PSI_iron-sulfur_center"/>
</dbReference>
<dbReference type="InterPro" id="IPR017491">
    <property type="entry name" value="PSI_PsaC"/>
</dbReference>
<dbReference type="NCBIfam" id="TIGR03048">
    <property type="entry name" value="PS_I_psaC"/>
    <property type="match status" value="1"/>
</dbReference>
<dbReference type="PANTHER" id="PTHR24960:SF79">
    <property type="entry name" value="PHOTOSYSTEM I IRON-SULFUR CENTER"/>
    <property type="match status" value="1"/>
</dbReference>
<dbReference type="PANTHER" id="PTHR24960">
    <property type="entry name" value="PHOTOSYSTEM I IRON-SULFUR CENTER-RELATED"/>
    <property type="match status" value="1"/>
</dbReference>
<dbReference type="Pfam" id="PF14697">
    <property type="entry name" value="Fer4_21"/>
    <property type="match status" value="1"/>
</dbReference>
<dbReference type="SUPFAM" id="SSF54862">
    <property type="entry name" value="4Fe-4S ferredoxins"/>
    <property type="match status" value="1"/>
</dbReference>
<dbReference type="PROSITE" id="PS00198">
    <property type="entry name" value="4FE4S_FER_1"/>
    <property type="match status" value="2"/>
</dbReference>
<dbReference type="PROSITE" id="PS51379">
    <property type="entry name" value="4FE4S_FER_2"/>
    <property type="match status" value="2"/>
</dbReference>
<geneLocation type="chloroplast"/>
<evidence type="ECO:0000250" key="1"/>
<evidence type="ECO:0000255" key="2">
    <source>
        <dbReference type="HAMAP-Rule" id="MF_01303"/>
    </source>
</evidence>
<reference key="1">
    <citation type="submission" date="2003-02" db="EMBL/GenBank/DDBJ databases">
        <title>Complete nucleotide sequence of Pinus koraiensis.</title>
        <authorList>
            <person name="Noh E.W."/>
            <person name="Lee J.S."/>
            <person name="Choi Y.I."/>
            <person name="Han M.S."/>
            <person name="Yi Y.S."/>
            <person name="Han S.U."/>
        </authorList>
    </citation>
    <scope>NUCLEOTIDE SEQUENCE [LARGE SCALE GENOMIC DNA]</scope>
    <source>
        <strain>KangWon16</strain>
    </source>
</reference>
<name>PSAC_PINKO</name>
<protein>
    <recommendedName>
        <fullName evidence="2">Photosystem I iron-sulfur center</fullName>
        <ecNumber evidence="2">1.97.1.12</ecNumber>
    </recommendedName>
    <alternativeName>
        <fullName evidence="2">9 kDa polypeptide</fullName>
    </alternativeName>
    <alternativeName>
        <fullName evidence="2">PSI-C</fullName>
    </alternativeName>
    <alternativeName>
        <fullName evidence="2">Photosystem I subunit VII</fullName>
    </alternativeName>
    <alternativeName>
        <fullName evidence="2">PsaC</fullName>
    </alternativeName>
</protein>
<sequence length="81" mass="9037">MAHSVKIYDTCIGCTQCVRACPTDVLEMIPWEGCKAKQIASAPRTEDCVGCKRCESACPTDFLSVRVYLWHETTRSMGLAY</sequence>
<accession>Q85WU9</accession>
<organism>
    <name type="scientific">Pinus koraiensis</name>
    <name type="common">Korean pine</name>
    <dbReference type="NCBI Taxonomy" id="88728"/>
    <lineage>
        <taxon>Eukaryota</taxon>
        <taxon>Viridiplantae</taxon>
        <taxon>Streptophyta</taxon>
        <taxon>Embryophyta</taxon>
        <taxon>Tracheophyta</taxon>
        <taxon>Spermatophyta</taxon>
        <taxon>Pinopsida</taxon>
        <taxon>Pinidae</taxon>
        <taxon>Conifers I</taxon>
        <taxon>Pinales</taxon>
        <taxon>Pinaceae</taxon>
        <taxon>Pinus</taxon>
        <taxon>Pinus subgen. Strobus</taxon>
    </lineage>
</organism>
<comment type="function">
    <text evidence="2">Apoprotein for the two 4Fe-4S centers FA and FB of photosystem I (PSI); essential for photochemical activity. FB is the terminal electron acceptor of PSI, donating electrons to ferredoxin. The C-terminus interacts with PsaA/B/D and helps assemble the protein into the PSI complex. Required for binding of PsaD and PsaE to PSI. PSI is a plastocyanin-ferredoxin oxidoreductase, converting photonic excitation into a charge separation, which transfers an electron from the donor P700 chlorophyll pair to the spectroscopically characterized acceptors A0, A1, FX, FA and FB in turn.</text>
</comment>
<comment type="catalytic activity">
    <reaction evidence="2">
        <text>reduced [plastocyanin] + hnu + oxidized [2Fe-2S]-[ferredoxin] = oxidized [plastocyanin] + reduced [2Fe-2S]-[ferredoxin]</text>
        <dbReference type="Rhea" id="RHEA:30407"/>
        <dbReference type="Rhea" id="RHEA-COMP:10000"/>
        <dbReference type="Rhea" id="RHEA-COMP:10001"/>
        <dbReference type="Rhea" id="RHEA-COMP:10039"/>
        <dbReference type="Rhea" id="RHEA-COMP:10040"/>
        <dbReference type="ChEBI" id="CHEBI:29036"/>
        <dbReference type="ChEBI" id="CHEBI:30212"/>
        <dbReference type="ChEBI" id="CHEBI:33737"/>
        <dbReference type="ChEBI" id="CHEBI:33738"/>
        <dbReference type="ChEBI" id="CHEBI:49552"/>
        <dbReference type="EC" id="1.97.1.12"/>
    </reaction>
</comment>
<comment type="cofactor">
    <cofactor evidence="2">
        <name>[4Fe-4S] cluster</name>
        <dbReference type="ChEBI" id="CHEBI:49883"/>
    </cofactor>
    <text evidence="2">Binds 2 [4Fe-4S] clusters. Cluster 2 is most probably the spectroscopically characterized electron acceptor FA and cluster 1 is most probably FB.</text>
</comment>
<comment type="subunit">
    <text evidence="2">The eukaryotic PSI reaction center is composed of at least 11 subunits.</text>
</comment>
<comment type="subcellular location">
    <subcellularLocation>
        <location evidence="2">Plastid</location>
        <location evidence="2">Chloroplast thylakoid membrane</location>
        <topology evidence="2">Peripheral membrane protein</topology>
        <orientation evidence="2">Stromal side</orientation>
    </subcellularLocation>
</comment>
<proteinExistence type="inferred from homology"/>